<accession>Q7MT94</accession>
<dbReference type="EC" id="6.1.1.2" evidence="1"/>
<dbReference type="EMBL" id="AE015924">
    <property type="protein sequence ID" value="AAQ67045.1"/>
    <property type="molecule type" value="Genomic_DNA"/>
</dbReference>
<dbReference type="RefSeq" id="WP_004584702.1">
    <property type="nucleotide sequence ID" value="NC_002950.2"/>
</dbReference>
<dbReference type="SMR" id="Q7MT94"/>
<dbReference type="STRING" id="242619.PG_2085"/>
<dbReference type="EnsemblBacteria" id="AAQ67045">
    <property type="protein sequence ID" value="AAQ67045"/>
    <property type="gene ID" value="PG_2085"/>
</dbReference>
<dbReference type="GeneID" id="29255389"/>
<dbReference type="KEGG" id="pgi:PG_2085"/>
<dbReference type="eggNOG" id="COG0180">
    <property type="taxonomic scope" value="Bacteria"/>
</dbReference>
<dbReference type="HOGENOM" id="CLU_029244_0_0_10"/>
<dbReference type="Proteomes" id="UP000000588">
    <property type="component" value="Chromosome"/>
</dbReference>
<dbReference type="GO" id="GO:0005829">
    <property type="term" value="C:cytosol"/>
    <property type="evidence" value="ECO:0007669"/>
    <property type="project" value="TreeGrafter"/>
</dbReference>
<dbReference type="GO" id="GO:0005524">
    <property type="term" value="F:ATP binding"/>
    <property type="evidence" value="ECO:0007669"/>
    <property type="project" value="UniProtKB-UniRule"/>
</dbReference>
<dbReference type="GO" id="GO:0004830">
    <property type="term" value="F:tryptophan-tRNA ligase activity"/>
    <property type="evidence" value="ECO:0007669"/>
    <property type="project" value="UniProtKB-UniRule"/>
</dbReference>
<dbReference type="GO" id="GO:0006436">
    <property type="term" value="P:tryptophanyl-tRNA aminoacylation"/>
    <property type="evidence" value="ECO:0007669"/>
    <property type="project" value="UniProtKB-UniRule"/>
</dbReference>
<dbReference type="CDD" id="cd00806">
    <property type="entry name" value="TrpRS_core"/>
    <property type="match status" value="1"/>
</dbReference>
<dbReference type="FunFam" id="1.10.240.10:FF:000005">
    <property type="entry name" value="Tryptophan--tRNA ligase"/>
    <property type="match status" value="1"/>
</dbReference>
<dbReference type="Gene3D" id="3.40.50.620">
    <property type="entry name" value="HUPs"/>
    <property type="match status" value="1"/>
</dbReference>
<dbReference type="Gene3D" id="1.10.240.10">
    <property type="entry name" value="Tyrosyl-Transfer RNA Synthetase"/>
    <property type="match status" value="1"/>
</dbReference>
<dbReference type="HAMAP" id="MF_00140_B">
    <property type="entry name" value="Trp_tRNA_synth_B"/>
    <property type="match status" value="1"/>
</dbReference>
<dbReference type="InterPro" id="IPR001412">
    <property type="entry name" value="aa-tRNA-synth_I_CS"/>
</dbReference>
<dbReference type="InterPro" id="IPR002305">
    <property type="entry name" value="aa-tRNA-synth_Ic"/>
</dbReference>
<dbReference type="InterPro" id="IPR014729">
    <property type="entry name" value="Rossmann-like_a/b/a_fold"/>
</dbReference>
<dbReference type="InterPro" id="IPR002306">
    <property type="entry name" value="Trp-tRNA-ligase"/>
</dbReference>
<dbReference type="InterPro" id="IPR024109">
    <property type="entry name" value="Trp-tRNA-ligase_bac-type"/>
</dbReference>
<dbReference type="InterPro" id="IPR050203">
    <property type="entry name" value="Trp-tRNA_synthetase"/>
</dbReference>
<dbReference type="NCBIfam" id="TIGR00233">
    <property type="entry name" value="trpS"/>
    <property type="match status" value="1"/>
</dbReference>
<dbReference type="PANTHER" id="PTHR43766">
    <property type="entry name" value="TRYPTOPHAN--TRNA LIGASE, MITOCHONDRIAL"/>
    <property type="match status" value="1"/>
</dbReference>
<dbReference type="PANTHER" id="PTHR43766:SF1">
    <property type="entry name" value="TRYPTOPHAN--TRNA LIGASE, MITOCHONDRIAL"/>
    <property type="match status" value="1"/>
</dbReference>
<dbReference type="Pfam" id="PF00579">
    <property type="entry name" value="tRNA-synt_1b"/>
    <property type="match status" value="1"/>
</dbReference>
<dbReference type="PRINTS" id="PR01039">
    <property type="entry name" value="TRNASYNTHTRP"/>
</dbReference>
<dbReference type="SUPFAM" id="SSF52374">
    <property type="entry name" value="Nucleotidylyl transferase"/>
    <property type="match status" value="1"/>
</dbReference>
<dbReference type="PROSITE" id="PS00178">
    <property type="entry name" value="AA_TRNA_LIGASE_I"/>
    <property type="match status" value="1"/>
</dbReference>
<keyword id="KW-0030">Aminoacyl-tRNA synthetase</keyword>
<keyword id="KW-0067">ATP-binding</keyword>
<keyword id="KW-0963">Cytoplasm</keyword>
<keyword id="KW-0436">Ligase</keyword>
<keyword id="KW-0547">Nucleotide-binding</keyword>
<keyword id="KW-0648">Protein biosynthesis</keyword>
<keyword id="KW-1185">Reference proteome</keyword>
<protein>
    <recommendedName>
        <fullName evidence="1">Tryptophan--tRNA ligase</fullName>
        <ecNumber evidence="1">6.1.1.2</ecNumber>
    </recommendedName>
    <alternativeName>
        <fullName evidence="1">Tryptophanyl-tRNA synthetase</fullName>
        <shortName evidence="1">TrpRS</shortName>
    </alternativeName>
</protein>
<comment type="function">
    <text evidence="1">Catalyzes the attachment of tryptophan to tRNA(Trp).</text>
</comment>
<comment type="catalytic activity">
    <reaction evidence="1">
        <text>tRNA(Trp) + L-tryptophan + ATP = L-tryptophyl-tRNA(Trp) + AMP + diphosphate + H(+)</text>
        <dbReference type="Rhea" id="RHEA:24080"/>
        <dbReference type="Rhea" id="RHEA-COMP:9671"/>
        <dbReference type="Rhea" id="RHEA-COMP:9705"/>
        <dbReference type="ChEBI" id="CHEBI:15378"/>
        <dbReference type="ChEBI" id="CHEBI:30616"/>
        <dbReference type="ChEBI" id="CHEBI:33019"/>
        <dbReference type="ChEBI" id="CHEBI:57912"/>
        <dbReference type="ChEBI" id="CHEBI:78442"/>
        <dbReference type="ChEBI" id="CHEBI:78535"/>
        <dbReference type="ChEBI" id="CHEBI:456215"/>
        <dbReference type="EC" id="6.1.1.2"/>
    </reaction>
</comment>
<comment type="subunit">
    <text evidence="1">Homodimer.</text>
</comment>
<comment type="subcellular location">
    <subcellularLocation>
        <location evidence="1">Cytoplasm</location>
    </subcellularLocation>
</comment>
<comment type="similarity">
    <text evidence="1">Belongs to the class-I aminoacyl-tRNA synthetase family.</text>
</comment>
<name>SYW_PORGI</name>
<organism>
    <name type="scientific">Porphyromonas gingivalis (strain ATCC BAA-308 / W83)</name>
    <dbReference type="NCBI Taxonomy" id="242619"/>
    <lineage>
        <taxon>Bacteria</taxon>
        <taxon>Pseudomonadati</taxon>
        <taxon>Bacteroidota</taxon>
        <taxon>Bacteroidia</taxon>
        <taxon>Bacteroidales</taxon>
        <taxon>Porphyromonadaceae</taxon>
        <taxon>Porphyromonas</taxon>
    </lineage>
</organism>
<gene>
    <name evidence="1" type="primary">trpS</name>
    <name type="ordered locus">PG_2085</name>
</gene>
<proteinExistence type="inferred from homology"/>
<sequence>METVVSGIRPTGNLHLGNYFGAIRSFLDMQHRYNCFFFIADWHSLTTHPHPDNIVRNVRTILAEYLACGIDPEKATIYVQSDVREVLELYLYLNMNAYLGELERTTSFKEKARKQPNNVNAGLLTYPTLMAADILIHRAVKVPVGKDQEQNMEMARKFARRFNTIYEVDFFPEPESFSPGATALKVPGLDGSGKMGKSEGNAIYLADDAKTISKKVMKAVTDAGPEVPNSVKPEPVENLFSMLRIVSSDEVYRHFDDLYNNCSIRYGDLKKQLAADIVAFTTPIRERILEIQADEAFLDRVVREGAERARESAARTLAEVRHIIGFR</sequence>
<feature type="chain" id="PRO_0000136658" description="Tryptophan--tRNA ligase">
    <location>
        <begin position="1"/>
        <end position="327"/>
    </location>
</feature>
<feature type="short sequence motif" description="'HIGH' region" evidence="1">
    <location>
        <begin position="10"/>
        <end position="18"/>
    </location>
</feature>
<feature type="short sequence motif" description="'KMSKS' region" evidence="1">
    <location>
        <begin position="194"/>
        <end position="198"/>
    </location>
</feature>
<feature type="binding site" evidence="1">
    <location>
        <begin position="9"/>
        <end position="11"/>
    </location>
    <ligand>
        <name>ATP</name>
        <dbReference type="ChEBI" id="CHEBI:30616"/>
    </ligand>
</feature>
<feature type="binding site" evidence="1">
    <location>
        <begin position="17"/>
        <end position="18"/>
    </location>
    <ligand>
        <name>ATP</name>
        <dbReference type="ChEBI" id="CHEBI:30616"/>
    </ligand>
</feature>
<feature type="binding site" evidence="1">
    <location>
        <position position="133"/>
    </location>
    <ligand>
        <name>L-tryptophan</name>
        <dbReference type="ChEBI" id="CHEBI:57912"/>
    </ligand>
</feature>
<feature type="binding site" evidence="1">
    <location>
        <begin position="145"/>
        <end position="147"/>
    </location>
    <ligand>
        <name>ATP</name>
        <dbReference type="ChEBI" id="CHEBI:30616"/>
    </ligand>
</feature>
<feature type="binding site" evidence="1">
    <location>
        <position position="186"/>
    </location>
    <ligand>
        <name>ATP</name>
        <dbReference type="ChEBI" id="CHEBI:30616"/>
    </ligand>
</feature>
<feature type="binding site" evidence="1">
    <location>
        <begin position="194"/>
        <end position="198"/>
    </location>
    <ligand>
        <name>ATP</name>
        <dbReference type="ChEBI" id="CHEBI:30616"/>
    </ligand>
</feature>
<reference key="1">
    <citation type="journal article" date="2003" name="J. Bacteriol.">
        <title>Complete genome sequence of the oral pathogenic bacterium Porphyromonas gingivalis strain W83.</title>
        <authorList>
            <person name="Nelson K.E."/>
            <person name="Fleischmann R.D."/>
            <person name="DeBoy R.T."/>
            <person name="Paulsen I.T."/>
            <person name="Fouts D.E."/>
            <person name="Eisen J.A."/>
            <person name="Daugherty S.C."/>
            <person name="Dodson R.J."/>
            <person name="Durkin A.S."/>
            <person name="Gwinn M.L."/>
            <person name="Haft D.H."/>
            <person name="Kolonay J.F."/>
            <person name="Nelson W.C."/>
            <person name="Mason T.M."/>
            <person name="Tallon L."/>
            <person name="Gray J."/>
            <person name="Granger D."/>
            <person name="Tettelin H."/>
            <person name="Dong H."/>
            <person name="Galvin J.L."/>
            <person name="Duncan M.J."/>
            <person name="Dewhirst F.E."/>
            <person name="Fraser C.M."/>
        </authorList>
    </citation>
    <scope>NUCLEOTIDE SEQUENCE [LARGE SCALE GENOMIC DNA]</scope>
    <source>
        <strain>ATCC BAA-308 / W83</strain>
    </source>
</reference>
<evidence type="ECO:0000255" key="1">
    <source>
        <dbReference type="HAMAP-Rule" id="MF_00140"/>
    </source>
</evidence>